<gene>
    <name evidence="1" type="primary">smpB</name>
    <name type="ordered locus">NGO_0986</name>
</gene>
<dbReference type="EMBL" id="AE004969">
    <property type="protein sequence ID" value="AAW89671.2"/>
    <property type="molecule type" value="Genomic_DNA"/>
</dbReference>
<dbReference type="RefSeq" id="WP_010358325.1">
    <property type="nucleotide sequence ID" value="NC_002946.2"/>
</dbReference>
<dbReference type="SMR" id="Q5F816"/>
<dbReference type="STRING" id="242231.NGO_0986"/>
<dbReference type="GeneID" id="86928561"/>
<dbReference type="KEGG" id="ngo:NGO_0986"/>
<dbReference type="HOGENOM" id="CLU_108953_3_0_4"/>
<dbReference type="Proteomes" id="UP000000535">
    <property type="component" value="Chromosome"/>
</dbReference>
<dbReference type="GO" id="GO:0005829">
    <property type="term" value="C:cytosol"/>
    <property type="evidence" value="ECO:0007669"/>
    <property type="project" value="TreeGrafter"/>
</dbReference>
<dbReference type="GO" id="GO:0003723">
    <property type="term" value="F:RNA binding"/>
    <property type="evidence" value="ECO:0007669"/>
    <property type="project" value="UniProtKB-UniRule"/>
</dbReference>
<dbReference type="GO" id="GO:0070929">
    <property type="term" value="P:trans-translation"/>
    <property type="evidence" value="ECO:0007669"/>
    <property type="project" value="UniProtKB-UniRule"/>
</dbReference>
<dbReference type="CDD" id="cd09294">
    <property type="entry name" value="SmpB"/>
    <property type="match status" value="1"/>
</dbReference>
<dbReference type="Gene3D" id="2.40.280.10">
    <property type="match status" value="1"/>
</dbReference>
<dbReference type="HAMAP" id="MF_00023">
    <property type="entry name" value="SmpB"/>
    <property type="match status" value="1"/>
</dbReference>
<dbReference type="InterPro" id="IPR023620">
    <property type="entry name" value="SmpB"/>
</dbReference>
<dbReference type="InterPro" id="IPR000037">
    <property type="entry name" value="SsrA-bd_prot"/>
</dbReference>
<dbReference type="InterPro" id="IPR020081">
    <property type="entry name" value="SsrA-bd_prot_CS"/>
</dbReference>
<dbReference type="NCBIfam" id="NF003843">
    <property type="entry name" value="PRK05422.1"/>
    <property type="match status" value="1"/>
</dbReference>
<dbReference type="NCBIfam" id="TIGR00086">
    <property type="entry name" value="smpB"/>
    <property type="match status" value="1"/>
</dbReference>
<dbReference type="PANTHER" id="PTHR30308:SF2">
    <property type="entry name" value="SSRA-BINDING PROTEIN"/>
    <property type="match status" value="1"/>
</dbReference>
<dbReference type="PANTHER" id="PTHR30308">
    <property type="entry name" value="TMRNA-BINDING COMPONENT OF TRANS-TRANSLATION TAGGING COMPLEX"/>
    <property type="match status" value="1"/>
</dbReference>
<dbReference type="Pfam" id="PF01668">
    <property type="entry name" value="SmpB"/>
    <property type="match status" value="1"/>
</dbReference>
<dbReference type="SUPFAM" id="SSF74982">
    <property type="entry name" value="Small protein B (SmpB)"/>
    <property type="match status" value="1"/>
</dbReference>
<dbReference type="PROSITE" id="PS01317">
    <property type="entry name" value="SSRP"/>
    <property type="match status" value="1"/>
</dbReference>
<organism>
    <name type="scientific">Neisseria gonorrhoeae (strain ATCC 700825 / FA 1090)</name>
    <dbReference type="NCBI Taxonomy" id="242231"/>
    <lineage>
        <taxon>Bacteria</taxon>
        <taxon>Pseudomonadati</taxon>
        <taxon>Pseudomonadota</taxon>
        <taxon>Betaproteobacteria</taxon>
        <taxon>Neisseriales</taxon>
        <taxon>Neisseriaceae</taxon>
        <taxon>Neisseria</taxon>
    </lineage>
</organism>
<proteinExistence type="inferred from homology"/>
<accession>Q5F816</accession>
<reference key="1">
    <citation type="submission" date="2003-03" db="EMBL/GenBank/DDBJ databases">
        <title>The complete genome sequence of Neisseria gonorrhoeae.</title>
        <authorList>
            <person name="Lewis L.A."/>
            <person name="Gillaspy A.F."/>
            <person name="McLaughlin R.E."/>
            <person name="Gipson M."/>
            <person name="Ducey T.F."/>
            <person name="Ownbey T."/>
            <person name="Hartman K."/>
            <person name="Nydick C."/>
            <person name="Carson M.B."/>
            <person name="Vaughn J."/>
            <person name="Thomson C."/>
            <person name="Song L."/>
            <person name="Lin S."/>
            <person name="Yuan X."/>
            <person name="Najar F."/>
            <person name="Zhan M."/>
            <person name="Ren Q."/>
            <person name="Zhu H."/>
            <person name="Qi S."/>
            <person name="Kenton S.M."/>
            <person name="Lai H."/>
            <person name="White J.D."/>
            <person name="Clifton S."/>
            <person name="Roe B.A."/>
            <person name="Dyer D.W."/>
        </authorList>
    </citation>
    <scope>NUCLEOTIDE SEQUENCE [LARGE SCALE GENOMIC DNA]</scope>
    <source>
        <strain>ATCC 700825 / FA 1090</strain>
    </source>
</reference>
<feature type="chain" id="PRO_0000102992" description="SsrA-binding protein">
    <location>
        <begin position="1"/>
        <end position="148"/>
    </location>
</feature>
<feature type="region of interest" description="Disordered" evidence="2">
    <location>
        <begin position="119"/>
        <end position="148"/>
    </location>
</feature>
<feature type="compositionally biased region" description="Basic and acidic residues" evidence="2">
    <location>
        <begin position="127"/>
        <end position="142"/>
    </location>
</feature>
<name>SSRP_NEIG1</name>
<comment type="function">
    <text evidence="1">Required for rescue of stalled ribosomes mediated by trans-translation. Binds to transfer-messenger RNA (tmRNA), required for stable association of tmRNA with ribosomes. tmRNA and SmpB together mimic tRNA shape, replacing the anticodon stem-loop with SmpB. tmRNA is encoded by the ssrA gene; the 2 termini fold to resemble tRNA(Ala) and it encodes a 'tag peptide', a short internal open reading frame. During trans-translation Ala-aminoacylated tmRNA acts like a tRNA, entering the A-site of stalled ribosomes, displacing the stalled mRNA. The ribosome then switches to translate the ORF on the tmRNA; the nascent peptide is terminated with the 'tag peptide' encoded by the tmRNA and targeted for degradation. The ribosome is freed to recommence translation, which seems to be the essential function of trans-translation.</text>
</comment>
<comment type="subcellular location">
    <subcellularLocation>
        <location evidence="1">Cytoplasm</location>
    </subcellularLocation>
    <text evidence="1">The tmRNA-SmpB complex associates with stalled 70S ribosomes.</text>
</comment>
<comment type="similarity">
    <text evidence="1">Belongs to the SmpB family.</text>
</comment>
<protein>
    <recommendedName>
        <fullName evidence="1">SsrA-binding protein</fullName>
    </recommendedName>
    <alternativeName>
        <fullName evidence="1">Small protein B</fullName>
    </alternativeName>
</protein>
<keyword id="KW-0963">Cytoplasm</keyword>
<keyword id="KW-1185">Reference proteome</keyword>
<keyword id="KW-0694">RNA-binding</keyword>
<evidence type="ECO:0000255" key="1">
    <source>
        <dbReference type="HAMAP-Rule" id="MF_00023"/>
    </source>
</evidence>
<evidence type="ECO:0000256" key="2">
    <source>
        <dbReference type="SAM" id="MobiDB-lite"/>
    </source>
</evidence>
<sequence length="148" mass="17193">MAIANNKKAFHDFFIEDRIEAGLVLEGWEVKAIRAARVQLKESYIYWKKDAFYLVGCHITALPTASTHIKPDAVRPRKLLLKQSEINKLIGKTERAGYTIVPLDLHFSRGKIKMEIGLAKGKKQHDKRQSMKEADWKREKQRLIKHTR</sequence>